<evidence type="ECO:0000250" key="1"/>
<evidence type="ECO:0000250" key="2">
    <source>
        <dbReference type="UniProtKB" id="Q92817"/>
    </source>
</evidence>
<evidence type="ECO:0000255" key="3"/>
<evidence type="ECO:0000255" key="4">
    <source>
        <dbReference type="PROSITE-ProRule" id="PRU00192"/>
    </source>
</evidence>
<evidence type="ECO:0000256" key="5">
    <source>
        <dbReference type="SAM" id="MobiDB-lite"/>
    </source>
</evidence>
<evidence type="ECO:0000305" key="6"/>
<evidence type="ECO:0007744" key="7">
    <source>
    </source>
</evidence>
<proteinExistence type="evidence at protein level"/>
<accession>Q9D952</accession>
<accession>B1AU57</accession>
<feature type="chain" id="PRO_0000078148" description="Envoplakin">
    <location>
        <begin position="1"/>
        <end position="2035"/>
    </location>
</feature>
<feature type="repeat" description="Spectrin">
    <location>
        <begin position="229"/>
        <end position="330"/>
    </location>
</feature>
<feature type="domain" description="SH3" evidence="4">
    <location>
        <begin position="413"/>
        <end position="470"/>
    </location>
</feature>
<feature type="repeat" description="Plectin 1">
    <location>
        <begin position="1186"/>
        <end position="1227"/>
    </location>
</feature>
<feature type="repeat" description="Plectin 2">
    <location>
        <begin position="1679"/>
        <end position="1714"/>
    </location>
</feature>
<feature type="repeat" description="Plectin 3">
    <location>
        <begin position="1819"/>
        <end position="1856"/>
    </location>
</feature>
<feature type="repeat" description="Plectin 4">
    <location>
        <begin position="1857"/>
        <end position="1894"/>
    </location>
</feature>
<feature type="repeat" description="Plectin 5">
    <location>
        <begin position="1895"/>
        <end position="1932"/>
    </location>
</feature>
<feature type="repeat" description="Plectin 6">
    <location>
        <begin position="1933"/>
        <end position="1970"/>
    </location>
</feature>
<feature type="repeat" description="Plectin 7">
    <location>
        <begin position="1971"/>
        <end position="2008"/>
    </location>
</feature>
<feature type="region of interest" description="Globular 1">
    <location>
        <begin position="1"/>
        <end position="841"/>
    </location>
</feature>
<feature type="region of interest" description="Disordered" evidence="5">
    <location>
        <begin position="1"/>
        <end position="37"/>
    </location>
</feature>
<feature type="region of interest" description="4 X 4 AA tandem repeats of K-G-S-P">
    <location>
        <begin position="12"/>
        <end position="28"/>
    </location>
</feature>
<feature type="region of interest" description="Disordered" evidence="5">
    <location>
        <begin position="63"/>
        <end position="84"/>
    </location>
</feature>
<feature type="region of interest" description="Disordered" evidence="5">
    <location>
        <begin position="400"/>
        <end position="419"/>
    </location>
</feature>
<feature type="region of interest" description="Central fibrous rod domain">
    <location>
        <begin position="842"/>
        <end position="1674"/>
    </location>
</feature>
<feature type="region of interest" description="Disordered" evidence="5">
    <location>
        <begin position="1607"/>
        <end position="1637"/>
    </location>
</feature>
<feature type="region of interest" description="Globular 2">
    <location>
        <begin position="1675"/>
        <end position="2035"/>
    </location>
</feature>
<feature type="coiled-coil region" evidence="3">
    <location>
        <begin position="842"/>
        <end position="1664"/>
    </location>
</feature>
<feature type="compositionally biased region" description="Low complexity" evidence="5">
    <location>
        <begin position="1"/>
        <end position="27"/>
    </location>
</feature>
<feature type="compositionally biased region" description="Polar residues" evidence="5">
    <location>
        <begin position="71"/>
        <end position="84"/>
    </location>
</feature>
<feature type="compositionally biased region" description="Basic and acidic residues" evidence="5">
    <location>
        <begin position="1607"/>
        <end position="1631"/>
    </location>
</feature>
<feature type="modified residue" description="Phosphoserine" evidence="7">
    <location>
        <position position="1576"/>
    </location>
</feature>
<feature type="modified residue" description="Phosphoserine" evidence="2">
    <location>
        <position position="1800"/>
    </location>
</feature>
<feature type="modified residue" description="Phosphoserine" evidence="2">
    <location>
        <position position="2026"/>
    </location>
</feature>
<feature type="sequence conflict" description="In Ref. 1; CAC38864." evidence="6" ref="1">
    <original>S</original>
    <variation>N</variation>
    <location>
        <position position="282"/>
    </location>
</feature>
<feature type="sequence conflict" description="In Ref. 1; CAC38864." evidence="6" ref="1">
    <original>Y</original>
    <variation>C</variation>
    <location>
        <position position="437"/>
    </location>
</feature>
<feature type="sequence conflict" description="In Ref. 1; CAC38864." evidence="6" ref="1">
    <original>C</original>
    <variation>W</variation>
    <location>
        <position position="466"/>
    </location>
</feature>
<feature type="sequence conflict" description="In Ref. 1; CAC38864." evidence="6" ref="1">
    <original>A</original>
    <variation>G</variation>
    <location>
        <position position="476"/>
    </location>
</feature>
<feature type="sequence conflict" description="In Ref. 1; CAC38864." evidence="6" ref="1">
    <original>L</original>
    <variation>V</variation>
    <location>
        <position position="604"/>
    </location>
</feature>
<feature type="sequence conflict" description="In Ref. 1; CAC38864." evidence="6" ref="1">
    <original>LN</original>
    <variation>FH</variation>
    <location>
        <begin position="610"/>
        <end position="611"/>
    </location>
</feature>
<feature type="sequence conflict" description="In Ref. 1; CAC38864." evidence="6" ref="1">
    <original>R</original>
    <variation>E</variation>
    <location>
        <position position="843"/>
    </location>
</feature>
<feature type="sequence conflict" description="In Ref. 1; CAC38864." evidence="6" ref="1">
    <original>S</original>
    <variation>N</variation>
    <location>
        <position position="852"/>
    </location>
</feature>
<feature type="sequence conflict" description="In Ref. 1; CAC38864." evidence="6" ref="1">
    <original>K</original>
    <variation>N</variation>
    <location>
        <position position="858"/>
    </location>
</feature>
<feature type="sequence conflict" description="In Ref. 1; CAC38864." evidence="6" ref="1">
    <original>P</original>
    <variation>L</variation>
    <location>
        <position position="1013"/>
    </location>
</feature>
<feature type="sequence conflict" description="In Ref. 1; CAC38864." evidence="6" ref="1">
    <original>R</original>
    <variation>W</variation>
    <location>
        <position position="1635"/>
    </location>
</feature>
<feature type="sequence conflict" description="In Ref. 1; CAC38864." evidence="6" ref="1">
    <original>GIY</original>
    <variation>EIF</variation>
    <location>
        <begin position="1830"/>
        <end position="1832"/>
    </location>
</feature>
<feature type="sequence conflict" description="In Ref. 1; CAC38864." evidence="6" ref="1">
    <original>EAQA</original>
    <variation>RPRQ</variation>
    <location>
        <begin position="1861"/>
        <end position="1864"/>
    </location>
</feature>
<dbReference type="EMBL" id="AJ309317">
    <property type="protein sequence ID" value="CAC38864.2"/>
    <property type="molecule type" value="Genomic_DNA"/>
</dbReference>
<dbReference type="EMBL" id="AJ319607">
    <property type="protein sequence ID" value="CAC38864.2"/>
    <property type="status" value="JOINED"/>
    <property type="molecule type" value="Genomic_DNA"/>
</dbReference>
<dbReference type="EMBL" id="AJ319608">
    <property type="protein sequence ID" value="CAC38864.2"/>
    <property type="status" value="JOINED"/>
    <property type="molecule type" value="Genomic_DNA"/>
</dbReference>
<dbReference type="EMBL" id="AJ319609">
    <property type="protein sequence ID" value="CAC38864.2"/>
    <property type="status" value="JOINED"/>
    <property type="molecule type" value="Genomic_DNA"/>
</dbReference>
<dbReference type="EMBL" id="AJ319610">
    <property type="protein sequence ID" value="CAC38864.2"/>
    <property type="status" value="JOINED"/>
    <property type="molecule type" value="Genomic_DNA"/>
</dbReference>
<dbReference type="EMBL" id="AJ319611">
    <property type="protein sequence ID" value="CAC38864.2"/>
    <property type="status" value="JOINED"/>
    <property type="molecule type" value="Genomic_DNA"/>
</dbReference>
<dbReference type="EMBL" id="AJ319612">
    <property type="protein sequence ID" value="CAC38864.2"/>
    <property type="status" value="JOINED"/>
    <property type="molecule type" value="Genomic_DNA"/>
</dbReference>
<dbReference type="EMBL" id="AJ319613">
    <property type="protein sequence ID" value="CAC38864.2"/>
    <property type="status" value="JOINED"/>
    <property type="molecule type" value="Genomic_DNA"/>
</dbReference>
<dbReference type="EMBL" id="AL669925">
    <property type="status" value="NOT_ANNOTATED_CDS"/>
    <property type="molecule type" value="Genomic_DNA"/>
</dbReference>
<dbReference type="EMBL" id="AK007353">
    <property type="status" value="NOT_ANNOTATED_CDS"/>
    <property type="molecule type" value="mRNA"/>
</dbReference>
<dbReference type="CCDS" id="CCDS25661.1"/>
<dbReference type="RefSeq" id="NP_079552.3">
    <property type="nucleotide sequence ID" value="NM_025276.3"/>
</dbReference>
<dbReference type="SMR" id="Q9D952"/>
<dbReference type="BioGRID" id="199548">
    <property type="interactions" value="24"/>
</dbReference>
<dbReference type="FunCoup" id="Q9D952">
    <property type="interactions" value="133"/>
</dbReference>
<dbReference type="IntAct" id="Q9D952">
    <property type="interactions" value="18"/>
</dbReference>
<dbReference type="STRING" id="10090.ENSMUSP00000037850"/>
<dbReference type="GlyGen" id="Q9D952">
    <property type="glycosylation" value="1 site, 1 O-linked glycan (1 site)"/>
</dbReference>
<dbReference type="iPTMnet" id="Q9D952"/>
<dbReference type="PhosphoSitePlus" id="Q9D952"/>
<dbReference type="PaxDb" id="10090-ENSMUSP00000037850"/>
<dbReference type="PeptideAtlas" id="Q9D952"/>
<dbReference type="ProteomicsDB" id="271507"/>
<dbReference type="Pumba" id="Q9D952"/>
<dbReference type="Antibodypedia" id="46112">
    <property type="antibodies" value="66 antibodies from 18 providers"/>
</dbReference>
<dbReference type="DNASU" id="14027"/>
<dbReference type="Ensembl" id="ENSMUST00000037007.4">
    <property type="protein sequence ID" value="ENSMUSP00000037850.4"/>
    <property type="gene ID" value="ENSMUSG00000034282.4"/>
</dbReference>
<dbReference type="GeneID" id="14027"/>
<dbReference type="KEGG" id="mmu:14027"/>
<dbReference type="UCSC" id="uc007mkp.1">
    <property type="organism name" value="mouse"/>
</dbReference>
<dbReference type="AGR" id="MGI:107507"/>
<dbReference type="CTD" id="2125"/>
<dbReference type="MGI" id="MGI:107507">
    <property type="gene designation" value="Evpl"/>
</dbReference>
<dbReference type="VEuPathDB" id="HostDB:ENSMUSG00000034282"/>
<dbReference type="eggNOG" id="KOG0516">
    <property type="taxonomic scope" value="Eukaryota"/>
</dbReference>
<dbReference type="GeneTree" id="ENSGT00940000153578"/>
<dbReference type="HOGENOM" id="CLU_001780_0_0_1"/>
<dbReference type="InParanoid" id="Q9D952"/>
<dbReference type="OMA" id="TEHACGA"/>
<dbReference type="OrthoDB" id="9945740at2759"/>
<dbReference type="PhylomeDB" id="Q9D952"/>
<dbReference type="TreeFam" id="TF342779"/>
<dbReference type="Reactome" id="R-MMU-6809371">
    <property type="pathway name" value="Formation of the cornified envelope"/>
</dbReference>
<dbReference type="BioGRID-ORCS" id="14027">
    <property type="hits" value="4 hits in 78 CRISPR screens"/>
</dbReference>
<dbReference type="ChiTaRS" id="Evpl">
    <property type="organism name" value="mouse"/>
</dbReference>
<dbReference type="PRO" id="PR:Q9D952"/>
<dbReference type="Proteomes" id="UP000000589">
    <property type="component" value="Chromosome 11"/>
</dbReference>
<dbReference type="RNAct" id="Q9D952">
    <property type="molecule type" value="protein"/>
</dbReference>
<dbReference type="Bgee" id="ENSMUSG00000034282">
    <property type="expression patterns" value="Expressed in esophagus and 134 other cell types or tissues"/>
</dbReference>
<dbReference type="GO" id="GO:0001533">
    <property type="term" value="C:cornified envelope"/>
    <property type="evidence" value="ECO:0000314"/>
    <property type="project" value="MGI"/>
</dbReference>
<dbReference type="GO" id="GO:0005829">
    <property type="term" value="C:cytosol"/>
    <property type="evidence" value="ECO:0007669"/>
    <property type="project" value="Ensembl"/>
</dbReference>
<dbReference type="GO" id="GO:0030057">
    <property type="term" value="C:desmosome"/>
    <property type="evidence" value="ECO:0007669"/>
    <property type="project" value="UniProtKB-SubCell"/>
</dbReference>
<dbReference type="GO" id="GO:0045111">
    <property type="term" value="C:intermediate filament cytoskeleton"/>
    <property type="evidence" value="ECO:0007669"/>
    <property type="project" value="Ensembl"/>
</dbReference>
<dbReference type="GO" id="GO:0045104">
    <property type="term" value="P:intermediate filament cytoskeleton organization"/>
    <property type="evidence" value="ECO:0007669"/>
    <property type="project" value="InterPro"/>
</dbReference>
<dbReference type="GO" id="GO:0031424">
    <property type="term" value="P:keratinization"/>
    <property type="evidence" value="ECO:0007669"/>
    <property type="project" value="UniProtKB-KW"/>
</dbReference>
<dbReference type="GO" id="GO:0002786">
    <property type="term" value="P:regulation of antibacterial peptide production"/>
    <property type="evidence" value="ECO:0000316"/>
    <property type="project" value="MGI"/>
</dbReference>
<dbReference type="FunFam" id="1.20.58.60:FF:000178">
    <property type="entry name" value="Envoplakin a"/>
    <property type="match status" value="1"/>
</dbReference>
<dbReference type="FunFam" id="3.90.1290.10:FF:000010">
    <property type="entry name" value="Envoplakin a"/>
    <property type="match status" value="1"/>
</dbReference>
<dbReference type="FunFam" id="3.30.160.780:FF:000002">
    <property type="entry name" value="Envoplakin b"/>
    <property type="match status" value="1"/>
</dbReference>
<dbReference type="FunFam" id="1.20.58.60:FF:000142">
    <property type="entry name" value="Envoplakin like"/>
    <property type="match status" value="1"/>
</dbReference>
<dbReference type="FunFam" id="1.20.58.60:FF:000109">
    <property type="entry name" value="Periplakin"/>
    <property type="match status" value="1"/>
</dbReference>
<dbReference type="FunFam" id="2.30.30.40:FF:000088">
    <property type="entry name" value="Periplakin"/>
    <property type="match status" value="1"/>
</dbReference>
<dbReference type="FunFam" id="1.20.58.60:FF:000030">
    <property type="entry name" value="Short stop, isoform K"/>
    <property type="match status" value="1"/>
</dbReference>
<dbReference type="Gene3D" id="1.20.58.60">
    <property type="match status" value="4"/>
</dbReference>
<dbReference type="Gene3D" id="3.30.160.780">
    <property type="match status" value="1"/>
</dbReference>
<dbReference type="Gene3D" id="3.90.1290.10">
    <property type="entry name" value="Plakin repeat"/>
    <property type="match status" value="1"/>
</dbReference>
<dbReference type="Gene3D" id="2.30.30.40">
    <property type="entry name" value="SH3 Domains"/>
    <property type="match status" value="1"/>
</dbReference>
<dbReference type="InterPro" id="IPR041615">
    <property type="entry name" value="Desmoplakin_SH3"/>
</dbReference>
<dbReference type="InterPro" id="IPR043197">
    <property type="entry name" value="Plakin"/>
</dbReference>
<dbReference type="InterPro" id="IPR035915">
    <property type="entry name" value="Plakin_repeat_sf"/>
</dbReference>
<dbReference type="InterPro" id="IPR001101">
    <property type="entry name" value="Plectin_repeat"/>
</dbReference>
<dbReference type="InterPro" id="IPR001452">
    <property type="entry name" value="SH3_domain"/>
</dbReference>
<dbReference type="InterPro" id="IPR018159">
    <property type="entry name" value="Spectrin/alpha-actinin"/>
</dbReference>
<dbReference type="InterPro" id="IPR055419">
    <property type="entry name" value="Spectrin_PEPL/EVPL"/>
</dbReference>
<dbReference type="PANTHER" id="PTHR23169">
    <property type="entry name" value="ENVOPLAKIN"/>
    <property type="match status" value="1"/>
</dbReference>
<dbReference type="PANTHER" id="PTHR23169:SF7">
    <property type="entry name" value="ENVOPLAKIN"/>
    <property type="match status" value="1"/>
</dbReference>
<dbReference type="Pfam" id="PF00681">
    <property type="entry name" value="Plectin"/>
    <property type="match status" value="4"/>
</dbReference>
<dbReference type="Pfam" id="PF17902">
    <property type="entry name" value="SH3_10"/>
    <property type="match status" value="1"/>
</dbReference>
<dbReference type="Pfam" id="PF23160">
    <property type="entry name" value="Spectrin_1st_PEPL"/>
    <property type="match status" value="1"/>
</dbReference>
<dbReference type="SMART" id="SM00250">
    <property type="entry name" value="PLEC"/>
    <property type="match status" value="8"/>
</dbReference>
<dbReference type="SMART" id="SM00150">
    <property type="entry name" value="SPEC"/>
    <property type="match status" value="1"/>
</dbReference>
<dbReference type="SUPFAM" id="SSF75399">
    <property type="entry name" value="Plakin repeat"/>
    <property type="match status" value="2"/>
</dbReference>
<dbReference type="SUPFAM" id="SSF46966">
    <property type="entry name" value="Spectrin repeat"/>
    <property type="match status" value="1"/>
</dbReference>
<dbReference type="PROSITE" id="PS50002">
    <property type="entry name" value="SH3"/>
    <property type="match status" value="1"/>
</dbReference>
<sequence>MFKGLSKGSQGKGSPKGSPAKGSPKGSPNKHNRAATQELALLISRMQANADQVERDILETQKKLQQDRQNGEQNQALQHQQETGRNLKEAEVLLKDLFLDVDKARRLKHPQAEEIEKDIKQLHERVTQECSEYRALYEKMVLPPDVGPRVDWARVLEQKQNLVREGHYGPGMAELEQQVAEHNILQREIEAYGQQLRTLVGPDANTIRNQYRELLKAASWRRQSLGSLYTHLQGCTKQLSALADQQGRILQQDWSDLMPDPAGVRREYEHFKQHELLAQERSINQLEDDADRMVELGHPAIGPIQVHQEALKMEWQNFLNLCICQESQLQRVEDYRRFQEEADSVSQTLAKLSSNLDTKYGFGTGDSSGSPTELLLQLEAEEKQLAIAERAVGDLQQRSQEVAPLPQRRNPSKQPLHVDSICDWDSGEVQLLRGERYTLKDNADPYTWLVQGPGGETKSAPAACLCIPAPDPEAVAKASRLATELQTLKQKLSTEKNRLKAAAVEHLQPGQQAPAGSAPADPQGQTLLSQMTQLDGDLGQIERQVLSWARSPLSQSSSLKDLEGRIHSCEGTAQRLQSLGAEKEAAQQECEAFLSTKPTGSAALQLPVVLNSVKNRYNDVQSLCHLYGEKAKAALGLEKQIQEADRVIQGFEAALALEGPVPEGSGALQERVSELQRQRKELLQQQACVLGLHRQLKATEHACSALQNNFQEFCQDLPRQQRQVRALTDRYHAVGDQLDLREKIVQDASLTYQQLRNSRDNLSSWLEQLPHHRVQPSDGPSQISYKLQAQKRLIQEILGREQDQATVSRLTRDLQEALQDYELQADTYRCSLEPALAVSAPKRLRVISLQESIQAQEKNLAKAYTEVAAAEQQQLRQLEFAKKMLRKKELDEDIQAIHSARQGSGSPAHARTAESEVLKTQLEEERKRVAEVQRDLEEQRQRLLQLRTQQPVARLEEKEVVEFYRDPQLESNLSQAASRVEEEGKRRARLQAELEAVAQKVVHLEGKRKTMQPHLLTKEVTQIERDPGLDSQVTQLHSEMQRLRGENGVLTARLEELKDELLALEQKEMNVKEKVVVKEVVKVEKDLEMVKAAQTLRLQIEEDAARRKGAKETVAKIQARIKDLEQAISSVEPKVIVKEVKKVEQDPGLLKEASRLRSLLEEEKNNNVALARELQELQEKYRVVEKQKPKVQLQERVSEIFQVLPETEQEIRRLRAQLQETGSKKSGVEQEVEKLLPELEVLRAQKPVVEYKEVTQEVVRHEKNPEVLREIDRLKAQLNELVNTNGRSQEQLIRLQGERDEWKRERSKVETKMVSKEVVRHEKDPVLEKEAERLRQEVREAVQRRRATEDAVYELQNKLLLLERRRPEEQIVVQEVVVTQKDPKLREEHSRLSRSLDEEVGRRRQLELEVRQLGARVEEEEARLSFEEDRSKKLAAERELRQLTLKIQELEKRPPALQEKIIMEEVVKLEKDPDLERSTEALRRELDQEKNRVTELHRECQGLQVQVDLLQKTKSQEKTIYKEVIRVEKDPVLEGERARVWEILNRERAARKGREEDVRSLQERIDRAEALRRSWSREEAELQRARDQASQDCGRLQRQLRELEQQKQQKARQLQEEGRLLSQKTESERQKAAQRSQAVTQLEAAILQEKDKIYEKERTLRDLHTKVSREELNQETQTRETNLSTKICILEPETGNDMSPYEAYKRGVIDRGQYLQLQELECDWEEVTTSSPCGEESVLLDRKSGKQYSIEAALRCRRISKEEYHRYKDGRLPISEFALLVAGETKPSSSLSIGSIISKSPVCSPGPQSTGFFSPGLSFGLTEDSFPIAGIYDTTTDNKCSIKAAVAKNMLDPITGQKLLEAQAATGGIVDLLSRERYSVHKAVERGLIENTSTQRLLNAQKAFTGIEDPVTRKRLSVGEAIQKGWMPQESVLPHLLVQHLTGGLIDPKRTGRIPVPQAVLCGMISEDLGQLLQDESGYEKDLTDPITKERLSYKEAMGRCRKDPLSGLLLLPAMLEGYRCYRAASPTLPRSCVR</sequence>
<organism>
    <name type="scientific">Mus musculus</name>
    <name type="common">Mouse</name>
    <dbReference type="NCBI Taxonomy" id="10090"/>
    <lineage>
        <taxon>Eukaryota</taxon>
        <taxon>Metazoa</taxon>
        <taxon>Chordata</taxon>
        <taxon>Craniata</taxon>
        <taxon>Vertebrata</taxon>
        <taxon>Euteleostomi</taxon>
        <taxon>Mammalia</taxon>
        <taxon>Eutheria</taxon>
        <taxon>Euarchontoglires</taxon>
        <taxon>Glires</taxon>
        <taxon>Rodentia</taxon>
        <taxon>Myomorpha</taxon>
        <taxon>Muroidea</taxon>
        <taxon>Muridae</taxon>
        <taxon>Murinae</taxon>
        <taxon>Mus</taxon>
        <taxon>Mus</taxon>
    </lineage>
</organism>
<keyword id="KW-0965">Cell junction</keyword>
<keyword id="KW-0175">Coiled coil</keyword>
<keyword id="KW-0963">Cytoplasm</keyword>
<keyword id="KW-0206">Cytoskeleton</keyword>
<keyword id="KW-0417">Keratinization</keyword>
<keyword id="KW-0597">Phosphoprotein</keyword>
<keyword id="KW-1185">Reference proteome</keyword>
<keyword id="KW-0677">Repeat</keyword>
<keyword id="KW-0728">SH3 domain</keyword>
<protein>
    <recommendedName>
        <fullName>Envoplakin</fullName>
    </recommendedName>
    <alternativeName>
        <fullName>210 kDa cornified envelope precursor protein</fullName>
    </alternativeName>
    <alternativeName>
        <fullName>p210</fullName>
    </alternativeName>
</protein>
<reference key="1">
    <citation type="journal article" date="2000" name="J. Biol. Chem.">
        <title>Structure and regulation of the envoplakin gene.</title>
        <authorList>
            <person name="Maatta A."/>
            <person name="Ruhrberg C."/>
            <person name="Watt F.M."/>
        </authorList>
    </citation>
    <scope>NUCLEOTIDE SEQUENCE [GENOMIC DNA]</scope>
    <source>
        <strain>129/Sv</strain>
    </source>
</reference>
<reference key="2">
    <citation type="journal article" date="2009" name="PLoS Biol.">
        <title>Lineage-specific biology revealed by a finished genome assembly of the mouse.</title>
        <authorList>
            <person name="Church D.M."/>
            <person name="Goodstadt L."/>
            <person name="Hillier L.W."/>
            <person name="Zody M.C."/>
            <person name="Goldstein S."/>
            <person name="She X."/>
            <person name="Bult C.J."/>
            <person name="Agarwala R."/>
            <person name="Cherry J.L."/>
            <person name="DiCuccio M."/>
            <person name="Hlavina W."/>
            <person name="Kapustin Y."/>
            <person name="Meric P."/>
            <person name="Maglott D."/>
            <person name="Birtle Z."/>
            <person name="Marques A.C."/>
            <person name="Graves T."/>
            <person name="Zhou S."/>
            <person name="Teague B."/>
            <person name="Potamousis K."/>
            <person name="Churas C."/>
            <person name="Place M."/>
            <person name="Herschleb J."/>
            <person name="Runnheim R."/>
            <person name="Forrest D."/>
            <person name="Amos-Landgraf J."/>
            <person name="Schwartz D.C."/>
            <person name="Cheng Z."/>
            <person name="Lindblad-Toh K."/>
            <person name="Eichler E.E."/>
            <person name="Ponting C.P."/>
        </authorList>
    </citation>
    <scope>NUCLEOTIDE SEQUENCE [LARGE SCALE GENOMIC DNA]</scope>
    <source>
        <strain>C57BL/6J</strain>
    </source>
</reference>
<reference key="3">
    <citation type="journal article" date="2005" name="Science">
        <title>The transcriptional landscape of the mammalian genome.</title>
        <authorList>
            <person name="Carninci P."/>
            <person name="Kasukawa T."/>
            <person name="Katayama S."/>
            <person name="Gough J."/>
            <person name="Frith M.C."/>
            <person name="Maeda N."/>
            <person name="Oyama R."/>
            <person name="Ravasi T."/>
            <person name="Lenhard B."/>
            <person name="Wells C."/>
            <person name="Kodzius R."/>
            <person name="Shimokawa K."/>
            <person name="Bajic V.B."/>
            <person name="Brenner S.E."/>
            <person name="Batalov S."/>
            <person name="Forrest A.R."/>
            <person name="Zavolan M."/>
            <person name="Davis M.J."/>
            <person name="Wilming L.G."/>
            <person name="Aidinis V."/>
            <person name="Allen J.E."/>
            <person name="Ambesi-Impiombato A."/>
            <person name="Apweiler R."/>
            <person name="Aturaliya R.N."/>
            <person name="Bailey T.L."/>
            <person name="Bansal M."/>
            <person name="Baxter L."/>
            <person name="Beisel K.W."/>
            <person name="Bersano T."/>
            <person name="Bono H."/>
            <person name="Chalk A.M."/>
            <person name="Chiu K.P."/>
            <person name="Choudhary V."/>
            <person name="Christoffels A."/>
            <person name="Clutterbuck D.R."/>
            <person name="Crowe M.L."/>
            <person name="Dalla E."/>
            <person name="Dalrymple B.P."/>
            <person name="de Bono B."/>
            <person name="Della Gatta G."/>
            <person name="di Bernardo D."/>
            <person name="Down T."/>
            <person name="Engstrom P."/>
            <person name="Fagiolini M."/>
            <person name="Faulkner G."/>
            <person name="Fletcher C.F."/>
            <person name="Fukushima T."/>
            <person name="Furuno M."/>
            <person name="Futaki S."/>
            <person name="Gariboldi M."/>
            <person name="Georgii-Hemming P."/>
            <person name="Gingeras T.R."/>
            <person name="Gojobori T."/>
            <person name="Green R.E."/>
            <person name="Gustincich S."/>
            <person name="Harbers M."/>
            <person name="Hayashi Y."/>
            <person name="Hensch T.K."/>
            <person name="Hirokawa N."/>
            <person name="Hill D."/>
            <person name="Huminiecki L."/>
            <person name="Iacono M."/>
            <person name="Ikeo K."/>
            <person name="Iwama A."/>
            <person name="Ishikawa T."/>
            <person name="Jakt M."/>
            <person name="Kanapin A."/>
            <person name="Katoh M."/>
            <person name="Kawasawa Y."/>
            <person name="Kelso J."/>
            <person name="Kitamura H."/>
            <person name="Kitano H."/>
            <person name="Kollias G."/>
            <person name="Krishnan S.P."/>
            <person name="Kruger A."/>
            <person name="Kummerfeld S.K."/>
            <person name="Kurochkin I.V."/>
            <person name="Lareau L.F."/>
            <person name="Lazarevic D."/>
            <person name="Lipovich L."/>
            <person name="Liu J."/>
            <person name="Liuni S."/>
            <person name="McWilliam S."/>
            <person name="Madan Babu M."/>
            <person name="Madera M."/>
            <person name="Marchionni L."/>
            <person name="Matsuda H."/>
            <person name="Matsuzawa S."/>
            <person name="Miki H."/>
            <person name="Mignone F."/>
            <person name="Miyake S."/>
            <person name="Morris K."/>
            <person name="Mottagui-Tabar S."/>
            <person name="Mulder N."/>
            <person name="Nakano N."/>
            <person name="Nakauchi H."/>
            <person name="Ng P."/>
            <person name="Nilsson R."/>
            <person name="Nishiguchi S."/>
            <person name="Nishikawa S."/>
            <person name="Nori F."/>
            <person name="Ohara O."/>
            <person name="Okazaki Y."/>
            <person name="Orlando V."/>
            <person name="Pang K.C."/>
            <person name="Pavan W.J."/>
            <person name="Pavesi G."/>
            <person name="Pesole G."/>
            <person name="Petrovsky N."/>
            <person name="Piazza S."/>
            <person name="Reed J."/>
            <person name="Reid J.F."/>
            <person name="Ring B.Z."/>
            <person name="Ringwald M."/>
            <person name="Rost B."/>
            <person name="Ruan Y."/>
            <person name="Salzberg S.L."/>
            <person name="Sandelin A."/>
            <person name="Schneider C."/>
            <person name="Schoenbach C."/>
            <person name="Sekiguchi K."/>
            <person name="Semple C.A."/>
            <person name="Seno S."/>
            <person name="Sessa L."/>
            <person name="Sheng Y."/>
            <person name="Shibata Y."/>
            <person name="Shimada H."/>
            <person name="Shimada K."/>
            <person name="Silva D."/>
            <person name="Sinclair B."/>
            <person name="Sperling S."/>
            <person name="Stupka E."/>
            <person name="Sugiura K."/>
            <person name="Sultana R."/>
            <person name="Takenaka Y."/>
            <person name="Taki K."/>
            <person name="Tammoja K."/>
            <person name="Tan S.L."/>
            <person name="Tang S."/>
            <person name="Taylor M.S."/>
            <person name="Tegner J."/>
            <person name="Teichmann S.A."/>
            <person name="Ueda H.R."/>
            <person name="van Nimwegen E."/>
            <person name="Verardo R."/>
            <person name="Wei C.L."/>
            <person name="Yagi K."/>
            <person name="Yamanishi H."/>
            <person name="Zabarovsky E."/>
            <person name="Zhu S."/>
            <person name="Zimmer A."/>
            <person name="Hide W."/>
            <person name="Bult C."/>
            <person name="Grimmond S.M."/>
            <person name="Teasdale R.D."/>
            <person name="Liu E.T."/>
            <person name="Brusic V."/>
            <person name="Quackenbush J."/>
            <person name="Wahlestedt C."/>
            <person name="Mattick J.S."/>
            <person name="Hume D.A."/>
            <person name="Kai C."/>
            <person name="Sasaki D."/>
            <person name="Tomaru Y."/>
            <person name="Fukuda S."/>
            <person name="Kanamori-Katayama M."/>
            <person name="Suzuki M."/>
            <person name="Aoki J."/>
            <person name="Arakawa T."/>
            <person name="Iida J."/>
            <person name="Imamura K."/>
            <person name="Itoh M."/>
            <person name="Kato T."/>
            <person name="Kawaji H."/>
            <person name="Kawagashira N."/>
            <person name="Kawashima T."/>
            <person name="Kojima M."/>
            <person name="Kondo S."/>
            <person name="Konno H."/>
            <person name="Nakano K."/>
            <person name="Ninomiya N."/>
            <person name="Nishio T."/>
            <person name="Okada M."/>
            <person name="Plessy C."/>
            <person name="Shibata K."/>
            <person name="Shiraki T."/>
            <person name="Suzuki S."/>
            <person name="Tagami M."/>
            <person name="Waki K."/>
            <person name="Watahiki A."/>
            <person name="Okamura-Oho Y."/>
            <person name="Suzuki H."/>
            <person name="Kawai J."/>
            <person name="Hayashizaki Y."/>
        </authorList>
    </citation>
    <scope>NUCLEOTIDE SEQUENCE [LARGE SCALE MRNA] OF 1860-2035</scope>
    <source>
        <strain>C57BL/6J</strain>
        <tissue>Pancreas</tissue>
    </source>
</reference>
<reference key="4">
    <citation type="journal article" date="2010" name="Cell">
        <title>A tissue-specific atlas of mouse protein phosphorylation and expression.</title>
        <authorList>
            <person name="Huttlin E.L."/>
            <person name="Jedrychowski M.P."/>
            <person name="Elias J.E."/>
            <person name="Goswami T."/>
            <person name="Rad R."/>
            <person name="Beausoleil S.A."/>
            <person name="Villen J."/>
            <person name="Haas W."/>
            <person name="Sowa M.E."/>
            <person name="Gygi S.P."/>
        </authorList>
    </citation>
    <scope>PHOSPHORYLATION [LARGE SCALE ANALYSIS] AT SER-1576</scope>
    <scope>IDENTIFICATION BY MASS SPECTROMETRY [LARGE SCALE ANALYSIS]</scope>
    <source>
        <tissue>Lung</tissue>
    </source>
</reference>
<name>EVPL_MOUSE</name>
<comment type="function">
    <text>Component of the cornified envelope of keratinocytes. May link the cornified envelope to desmosomes and intermediate filaments.</text>
</comment>
<comment type="subunit">
    <text>May form a homodimer or a heterodimer with PPL.</text>
</comment>
<comment type="subcellular location">
    <subcellularLocation>
        <location evidence="1">Cell junction</location>
        <location evidence="1">Desmosome</location>
    </subcellularLocation>
    <subcellularLocation>
        <location evidence="1">Cornified envelope</location>
    </subcellularLocation>
    <subcellularLocation>
        <location evidence="1">Cytoplasm</location>
        <location evidence="1">Cytoskeleton</location>
    </subcellularLocation>
    <text evidence="1">Colocalized with DSP at desmosomes and along intermediate filaments.</text>
</comment>
<comment type="similarity">
    <text evidence="6">Belongs to the plakin or cytolinker family.</text>
</comment>
<gene>
    <name type="primary">Evpl</name>
</gene>